<gene>
    <name evidence="1" type="primary">efp</name>
    <name type="ordered locus">SAR11_0582</name>
</gene>
<keyword id="KW-0963">Cytoplasm</keyword>
<keyword id="KW-0251">Elongation factor</keyword>
<keyword id="KW-0648">Protein biosynthesis</keyword>
<keyword id="KW-1185">Reference proteome</keyword>
<feature type="chain" id="PRO_1000010800" description="Elongation factor P">
    <location>
        <begin position="1"/>
        <end position="186"/>
    </location>
</feature>
<accession>Q4FN36</accession>
<proteinExistence type="inferred from homology"/>
<evidence type="ECO:0000255" key="1">
    <source>
        <dbReference type="HAMAP-Rule" id="MF_00141"/>
    </source>
</evidence>
<sequence>MKLYASEIRVGMLIEYKNDLWQVLKTQHVKPGKGGAFAQVEMKSVNKNTKLNERFRSSESVEKASLDETKFNYLYSDEIDYYFMDPKSYEQINIKKETIGEKGKMLTENLEVSISFYNEKPLTVELPNQVTCTVDTTDVALKGQTVSSSYKPATLDNGVNIQVPPFIESGDKIIVDTRTMEYVKKI</sequence>
<comment type="function">
    <text evidence="1">Involved in peptide bond synthesis. Stimulates efficient translation and peptide-bond synthesis on native or reconstituted 70S ribosomes in vitro. Probably functions indirectly by altering the affinity of the ribosome for aminoacyl-tRNA, thus increasing their reactivity as acceptors for peptidyl transferase.</text>
</comment>
<comment type="pathway">
    <text evidence="1">Protein biosynthesis; polypeptide chain elongation.</text>
</comment>
<comment type="subcellular location">
    <subcellularLocation>
        <location evidence="1">Cytoplasm</location>
    </subcellularLocation>
</comment>
<comment type="similarity">
    <text evidence="1">Belongs to the elongation factor P family.</text>
</comment>
<dbReference type="EMBL" id="CP000084">
    <property type="protein sequence ID" value="AAZ21403.1"/>
    <property type="molecule type" value="Genomic_DNA"/>
</dbReference>
<dbReference type="RefSeq" id="WP_006997322.1">
    <property type="nucleotide sequence ID" value="NC_007205.1"/>
</dbReference>
<dbReference type="SMR" id="Q4FN36"/>
<dbReference type="STRING" id="335992.SAR11_0582"/>
<dbReference type="GeneID" id="66295087"/>
<dbReference type="KEGG" id="pub:SAR11_0582"/>
<dbReference type="eggNOG" id="COG0231">
    <property type="taxonomic scope" value="Bacteria"/>
</dbReference>
<dbReference type="HOGENOM" id="CLU_074944_1_1_5"/>
<dbReference type="OrthoDB" id="9801844at2"/>
<dbReference type="UniPathway" id="UPA00345"/>
<dbReference type="Proteomes" id="UP000002528">
    <property type="component" value="Chromosome"/>
</dbReference>
<dbReference type="GO" id="GO:0005737">
    <property type="term" value="C:cytoplasm"/>
    <property type="evidence" value="ECO:0007669"/>
    <property type="project" value="UniProtKB-SubCell"/>
</dbReference>
<dbReference type="GO" id="GO:0003746">
    <property type="term" value="F:translation elongation factor activity"/>
    <property type="evidence" value="ECO:0007669"/>
    <property type="project" value="UniProtKB-UniRule"/>
</dbReference>
<dbReference type="GO" id="GO:0043043">
    <property type="term" value="P:peptide biosynthetic process"/>
    <property type="evidence" value="ECO:0007669"/>
    <property type="project" value="InterPro"/>
</dbReference>
<dbReference type="CDD" id="cd04470">
    <property type="entry name" value="S1_EF-P_repeat_1"/>
    <property type="match status" value="1"/>
</dbReference>
<dbReference type="CDD" id="cd05794">
    <property type="entry name" value="S1_EF-P_repeat_2"/>
    <property type="match status" value="1"/>
</dbReference>
<dbReference type="FunFam" id="2.30.30.30:FF:000003">
    <property type="entry name" value="Elongation factor P"/>
    <property type="match status" value="1"/>
</dbReference>
<dbReference type="FunFam" id="2.40.50.140:FF:000004">
    <property type="entry name" value="Elongation factor P"/>
    <property type="match status" value="1"/>
</dbReference>
<dbReference type="FunFam" id="2.40.50.140:FF:000009">
    <property type="entry name" value="Elongation factor P"/>
    <property type="match status" value="1"/>
</dbReference>
<dbReference type="Gene3D" id="2.30.30.30">
    <property type="match status" value="1"/>
</dbReference>
<dbReference type="Gene3D" id="2.40.50.140">
    <property type="entry name" value="Nucleic acid-binding proteins"/>
    <property type="match status" value="2"/>
</dbReference>
<dbReference type="HAMAP" id="MF_00141">
    <property type="entry name" value="EF_P"/>
    <property type="match status" value="1"/>
</dbReference>
<dbReference type="InterPro" id="IPR015365">
    <property type="entry name" value="Elong-fact-P_C"/>
</dbReference>
<dbReference type="InterPro" id="IPR012340">
    <property type="entry name" value="NA-bd_OB-fold"/>
</dbReference>
<dbReference type="InterPro" id="IPR014722">
    <property type="entry name" value="Rib_uL2_dom2"/>
</dbReference>
<dbReference type="InterPro" id="IPR020599">
    <property type="entry name" value="Transl_elong_fac_P/YeiP"/>
</dbReference>
<dbReference type="InterPro" id="IPR013185">
    <property type="entry name" value="Transl_elong_KOW-like"/>
</dbReference>
<dbReference type="InterPro" id="IPR001059">
    <property type="entry name" value="Transl_elong_P/YeiP_cen"/>
</dbReference>
<dbReference type="InterPro" id="IPR013852">
    <property type="entry name" value="Transl_elong_P/YeiP_CS"/>
</dbReference>
<dbReference type="InterPro" id="IPR011768">
    <property type="entry name" value="Transl_elongation_fac_P"/>
</dbReference>
<dbReference type="InterPro" id="IPR008991">
    <property type="entry name" value="Translation_prot_SH3-like_sf"/>
</dbReference>
<dbReference type="NCBIfam" id="TIGR00038">
    <property type="entry name" value="efp"/>
    <property type="match status" value="1"/>
</dbReference>
<dbReference type="NCBIfam" id="NF001810">
    <property type="entry name" value="PRK00529.1"/>
    <property type="match status" value="1"/>
</dbReference>
<dbReference type="PANTHER" id="PTHR30053">
    <property type="entry name" value="ELONGATION FACTOR P"/>
    <property type="match status" value="1"/>
</dbReference>
<dbReference type="PANTHER" id="PTHR30053:SF14">
    <property type="entry name" value="TRANSLATION ELONGATION FACTOR KOW-LIKE DOMAIN-CONTAINING PROTEIN"/>
    <property type="match status" value="1"/>
</dbReference>
<dbReference type="Pfam" id="PF01132">
    <property type="entry name" value="EFP"/>
    <property type="match status" value="1"/>
</dbReference>
<dbReference type="Pfam" id="PF08207">
    <property type="entry name" value="EFP_N"/>
    <property type="match status" value="1"/>
</dbReference>
<dbReference type="Pfam" id="PF09285">
    <property type="entry name" value="Elong-fact-P_C"/>
    <property type="match status" value="1"/>
</dbReference>
<dbReference type="PIRSF" id="PIRSF005901">
    <property type="entry name" value="EF-P"/>
    <property type="match status" value="1"/>
</dbReference>
<dbReference type="SMART" id="SM01185">
    <property type="entry name" value="EFP"/>
    <property type="match status" value="1"/>
</dbReference>
<dbReference type="SMART" id="SM00841">
    <property type="entry name" value="Elong-fact-P_C"/>
    <property type="match status" value="1"/>
</dbReference>
<dbReference type="SUPFAM" id="SSF50249">
    <property type="entry name" value="Nucleic acid-binding proteins"/>
    <property type="match status" value="2"/>
</dbReference>
<dbReference type="SUPFAM" id="SSF50104">
    <property type="entry name" value="Translation proteins SH3-like domain"/>
    <property type="match status" value="1"/>
</dbReference>
<dbReference type="PROSITE" id="PS01275">
    <property type="entry name" value="EFP"/>
    <property type="match status" value="1"/>
</dbReference>
<reference key="1">
    <citation type="journal article" date="2005" name="Science">
        <title>Genome streamlining in a cosmopolitan oceanic bacterium.</title>
        <authorList>
            <person name="Giovannoni S.J."/>
            <person name="Tripp H.J."/>
            <person name="Givan S."/>
            <person name="Podar M."/>
            <person name="Vergin K.L."/>
            <person name="Baptista D."/>
            <person name="Bibbs L."/>
            <person name="Eads J."/>
            <person name="Richardson T.H."/>
            <person name="Noordewier M."/>
            <person name="Rappe M.S."/>
            <person name="Short J.M."/>
            <person name="Carrington J.C."/>
            <person name="Mathur E.J."/>
        </authorList>
    </citation>
    <scope>NUCLEOTIDE SEQUENCE [LARGE SCALE GENOMIC DNA]</scope>
    <source>
        <strain>HTCC1062</strain>
    </source>
</reference>
<organism>
    <name type="scientific">Pelagibacter ubique (strain HTCC1062)</name>
    <dbReference type="NCBI Taxonomy" id="335992"/>
    <lineage>
        <taxon>Bacteria</taxon>
        <taxon>Pseudomonadati</taxon>
        <taxon>Pseudomonadota</taxon>
        <taxon>Alphaproteobacteria</taxon>
        <taxon>Candidatus Pelagibacterales</taxon>
        <taxon>Candidatus Pelagibacteraceae</taxon>
        <taxon>Candidatus Pelagibacter</taxon>
    </lineage>
</organism>
<name>EFP_PELUB</name>
<protein>
    <recommendedName>
        <fullName evidence="1">Elongation factor P</fullName>
        <shortName evidence="1">EF-P</shortName>
    </recommendedName>
</protein>